<evidence type="ECO:0000255" key="1"/>
<evidence type="ECO:0000255" key="2">
    <source>
        <dbReference type="PROSITE-ProRule" id="PRU00521"/>
    </source>
</evidence>
<evidence type="ECO:0000305" key="3"/>
<reference key="1">
    <citation type="submission" date="2001-07" db="EMBL/GenBank/DDBJ databases">
        <title>Genome-wide discovery and analysis of human seven transmembrane helix receptor genes.</title>
        <authorList>
            <person name="Suwa M."/>
            <person name="Sato T."/>
            <person name="Okouchi I."/>
            <person name="Arita M."/>
            <person name="Futami K."/>
            <person name="Matsumoto S."/>
            <person name="Tsutsumi S."/>
            <person name="Aburatani H."/>
            <person name="Asai K."/>
            <person name="Akiyama Y."/>
        </authorList>
    </citation>
    <scope>NUCLEOTIDE SEQUENCE [GENOMIC DNA]</scope>
</reference>
<reference key="2">
    <citation type="journal article" date="2004" name="Proc. Natl. Acad. Sci. U.S.A.">
        <title>The human olfactory receptor gene family.</title>
        <authorList>
            <person name="Malnic B."/>
            <person name="Godfrey P.A."/>
            <person name="Buck L.B."/>
        </authorList>
    </citation>
    <scope>IDENTIFICATION</scope>
</reference>
<reference key="3">
    <citation type="journal article" date="2004" name="Proc. Natl. Acad. Sci. U.S.A.">
        <authorList>
            <person name="Malnic B."/>
            <person name="Godfrey P.A."/>
            <person name="Buck L.B."/>
        </authorList>
    </citation>
    <scope>ERRATUM OF PUBMED:14983052</scope>
</reference>
<sequence>MERQNQSCVVEFILLGFSNYPELQGQLFVAFLVIYLVTLIGNAIIIVIVSLDQSLHVPMYLFLLNLSVVDLSFSAVIMPEMLVVLSTEKTTISFGGCFAQMYFILLFGGAECFLLGAMAYDRFAAICHPLNYQMIMNKGVFMKLIIFSWALGFMLGTVQTSWVSSFPFCGLNEINHISCETPAVLELACADTFLFEIYAFTGTFLIILVPFLLILLSYIRVLFAILKMPSTTGRQKAFSTCAAHLTSVTLFYGTASMTYLQPKSGYSPETKKVMSLSYSLLTPLLNLLIYSLRNSEMKRALMKLWRRRVVLHTI</sequence>
<keyword id="KW-1003">Cell membrane</keyword>
<keyword id="KW-1015">Disulfide bond</keyword>
<keyword id="KW-0297">G-protein coupled receptor</keyword>
<keyword id="KW-0325">Glycoprotein</keyword>
<keyword id="KW-0472">Membrane</keyword>
<keyword id="KW-0552">Olfaction</keyword>
<keyword id="KW-0675">Receptor</keyword>
<keyword id="KW-1185">Reference proteome</keyword>
<keyword id="KW-0716">Sensory transduction</keyword>
<keyword id="KW-0807">Transducer</keyword>
<keyword id="KW-0812">Transmembrane</keyword>
<keyword id="KW-1133">Transmembrane helix</keyword>
<name>O10A6_HUMAN</name>
<dbReference type="EMBL" id="AB065515">
    <property type="protein sequence ID" value="BAC05763.1"/>
    <property type="molecule type" value="Genomic_DNA"/>
</dbReference>
<dbReference type="EMBL" id="BK004403">
    <property type="protein sequence ID" value="DAA04801.1"/>
    <property type="molecule type" value="Genomic_DNA"/>
</dbReference>
<dbReference type="RefSeq" id="NP_001004461.1">
    <property type="nucleotide sequence ID" value="NM_001004461.2"/>
</dbReference>
<dbReference type="RefSeq" id="NP_001376503.1">
    <property type="nucleotide sequence ID" value="NM_001389574.1"/>
</dbReference>
<dbReference type="SMR" id="Q8NH74"/>
<dbReference type="FunCoup" id="Q8NH74">
    <property type="interactions" value="443"/>
</dbReference>
<dbReference type="STRING" id="9606.ENSP00000492919"/>
<dbReference type="GlyCosmos" id="Q8NH74">
    <property type="glycosylation" value="1 site, No reported glycans"/>
</dbReference>
<dbReference type="GlyGen" id="Q8NH74">
    <property type="glycosylation" value="1 site"/>
</dbReference>
<dbReference type="PhosphoSitePlus" id="Q8NH74"/>
<dbReference type="BioMuta" id="OR10A6"/>
<dbReference type="DMDM" id="38372823"/>
<dbReference type="PaxDb" id="9606-ENSP00000312470"/>
<dbReference type="Antibodypedia" id="78355">
    <property type="antibodies" value="59 antibodies from 16 providers"/>
</dbReference>
<dbReference type="DNASU" id="390093"/>
<dbReference type="Ensembl" id="ENST00000622207.2">
    <property type="protein sequence ID" value="ENSP00000478945.1"/>
    <property type="gene ID" value="ENSG00000276451.2"/>
</dbReference>
<dbReference type="Ensembl" id="ENST00000625231.2">
    <property type="protein sequence ID" value="ENSP00000486810.1"/>
    <property type="gene ID" value="ENSG00000280899.3"/>
</dbReference>
<dbReference type="Ensembl" id="ENST00000641238.1">
    <property type="protein sequence ID" value="ENSP00000493068.1"/>
    <property type="gene ID" value="ENSG00000279000.4"/>
</dbReference>
<dbReference type="Ensembl" id="ENST00000641640.1">
    <property type="protein sequence ID" value="ENSP00000493246.1"/>
    <property type="gene ID" value="ENSG00000280899.3"/>
</dbReference>
<dbReference type="Ensembl" id="ENST00000641884.1">
    <property type="protein sequence ID" value="ENSP00000493158.1"/>
    <property type="gene ID" value="ENSG00000280899.3"/>
</dbReference>
<dbReference type="Ensembl" id="ENST00000642108.1">
    <property type="protein sequence ID" value="ENSP00000492919.1"/>
    <property type="gene ID" value="ENSG00000279000.4"/>
</dbReference>
<dbReference type="GeneID" id="390093"/>
<dbReference type="KEGG" id="hsa:390093"/>
<dbReference type="MANE-Select" id="ENST00000641238.1">
    <property type="protein sequence ID" value="ENSP00000493068.1"/>
    <property type="RefSeq nucleotide sequence ID" value="NM_001004461.2"/>
    <property type="RefSeq protein sequence ID" value="NP_001004461.1"/>
</dbReference>
<dbReference type="UCSC" id="uc010rbh.2">
    <property type="organism name" value="human"/>
</dbReference>
<dbReference type="AGR" id="HGNC:15132"/>
<dbReference type="CTD" id="390093"/>
<dbReference type="GeneCards" id="OR10A6"/>
<dbReference type="HGNC" id="HGNC:15132">
    <property type="gene designation" value="OR10A6"/>
</dbReference>
<dbReference type="HPA" id="ENSG00000279000">
    <property type="expression patterns" value="Not detected"/>
</dbReference>
<dbReference type="neXtProt" id="NX_Q8NH74"/>
<dbReference type="PharmGKB" id="PA31954"/>
<dbReference type="VEuPathDB" id="HostDB:ENSG00000279000"/>
<dbReference type="eggNOG" id="ENOG502QVH7">
    <property type="taxonomic scope" value="Eukaryota"/>
</dbReference>
<dbReference type="GeneTree" id="ENSGT01130000278317"/>
<dbReference type="HOGENOM" id="CLU_012526_1_0_1"/>
<dbReference type="InParanoid" id="Q8NH74"/>
<dbReference type="OMA" id="KLLMMSW"/>
<dbReference type="OrthoDB" id="9975554at2759"/>
<dbReference type="PAN-GO" id="Q8NH74">
    <property type="GO annotations" value="1 GO annotation based on evolutionary models"/>
</dbReference>
<dbReference type="PhylomeDB" id="Q8NH74"/>
<dbReference type="TreeFam" id="TF337350"/>
<dbReference type="PathwayCommons" id="Q8NH74"/>
<dbReference type="Reactome" id="R-HSA-381753">
    <property type="pathway name" value="Olfactory Signaling Pathway"/>
</dbReference>
<dbReference type="Reactome" id="R-HSA-9752946">
    <property type="pathway name" value="Expression and translocation of olfactory receptors"/>
</dbReference>
<dbReference type="BioGRID-ORCS" id="390093">
    <property type="hits" value="3 hits in 728 CRISPR screens"/>
</dbReference>
<dbReference type="GeneWiki" id="OR10A6"/>
<dbReference type="GenomeRNAi" id="390093"/>
<dbReference type="Pharos" id="Q8NH74">
    <property type="development level" value="Tdark"/>
</dbReference>
<dbReference type="PRO" id="PR:Q8NH74"/>
<dbReference type="Proteomes" id="UP000005640">
    <property type="component" value="Chromosome 11"/>
</dbReference>
<dbReference type="RNAct" id="Q8NH74">
    <property type="molecule type" value="protein"/>
</dbReference>
<dbReference type="Bgee" id="ENSG00000279000">
    <property type="expression patterns" value="Expressed in skin of leg and 4 other cell types or tissues"/>
</dbReference>
<dbReference type="ExpressionAtlas" id="Q8NH74">
    <property type="expression patterns" value="baseline and differential"/>
</dbReference>
<dbReference type="GO" id="GO:0005886">
    <property type="term" value="C:plasma membrane"/>
    <property type="evidence" value="ECO:0000318"/>
    <property type="project" value="GO_Central"/>
</dbReference>
<dbReference type="GO" id="GO:0004930">
    <property type="term" value="F:G protein-coupled receptor activity"/>
    <property type="evidence" value="ECO:0007669"/>
    <property type="project" value="UniProtKB-KW"/>
</dbReference>
<dbReference type="GO" id="GO:0004984">
    <property type="term" value="F:olfactory receptor activity"/>
    <property type="evidence" value="ECO:0000318"/>
    <property type="project" value="GO_Central"/>
</dbReference>
<dbReference type="GO" id="GO:0050911">
    <property type="term" value="P:detection of chemical stimulus involved in sensory perception of smell"/>
    <property type="evidence" value="ECO:0000318"/>
    <property type="project" value="GO_Central"/>
</dbReference>
<dbReference type="CDD" id="cd15225">
    <property type="entry name" value="7tmA_OR10A-like"/>
    <property type="match status" value="1"/>
</dbReference>
<dbReference type="FunFam" id="1.20.1070.10:FF:000001">
    <property type="entry name" value="Olfactory receptor"/>
    <property type="match status" value="1"/>
</dbReference>
<dbReference type="Gene3D" id="1.20.1070.10">
    <property type="entry name" value="Rhodopsin 7-helix transmembrane proteins"/>
    <property type="match status" value="1"/>
</dbReference>
<dbReference type="InterPro" id="IPR000276">
    <property type="entry name" value="GPCR_Rhodpsn"/>
</dbReference>
<dbReference type="InterPro" id="IPR017452">
    <property type="entry name" value="GPCR_Rhodpsn_7TM"/>
</dbReference>
<dbReference type="InterPro" id="IPR000725">
    <property type="entry name" value="Olfact_rcpt"/>
</dbReference>
<dbReference type="PANTHER" id="PTHR26453">
    <property type="entry name" value="OLFACTORY RECEPTOR"/>
    <property type="match status" value="1"/>
</dbReference>
<dbReference type="Pfam" id="PF13853">
    <property type="entry name" value="7tm_4"/>
    <property type="match status" value="1"/>
</dbReference>
<dbReference type="PRINTS" id="PR00237">
    <property type="entry name" value="GPCRRHODOPSN"/>
</dbReference>
<dbReference type="PRINTS" id="PR00245">
    <property type="entry name" value="OLFACTORYR"/>
</dbReference>
<dbReference type="SUPFAM" id="SSF81321">
    <property type="entry name" value="Family A G protein-coupled receptor-like"/>
    <property type="match status" value="1"/>
</dbReference>
<dbReference type="PROSITE" id="PS00237">
    <property type="entry name" value="G_PROTEIN_RECEP_F1_1"/>
    <property type="match status" value="1"/>
</dbReference>
<dbReference type="PROSITE" id="PS50262">
    <property type="entry name" value="G_PROTEIN_RECEP_F1_2"/>
    <property type="match status" value="1"/>
</dbReference>
<gene>
    <name type="primary">OR10A6</name>
</gene>
<proteinExistence type="inferred from homology"/>
<protein>
    <recommendedName>
        <fullName>Olfactory receptor 10A6</fullName>
    </recommendedName>
    <alternativeName>
        <fullName>Olfactory receptor OR11-96</fullName>
    </alternativeName>
</protein>
<organism>
    <name type="scientific">Homo sapiens</name>
    <name type="common">Human</name>
    <dbReference type="NCBI Taxonomy" id="9606"/>
    <lineage>
        <taxon>Eukaryota</taxon>
        <taxon>Metazoa</taxon>
        <taxon>Chordata</taxon>
        <taxon>Craniata</taxon>
        <taxon>Vertebrata</taxon>
        <taxon>Euteleostomi</taxon>
        <taxon>Mammalia</taxon>
        <taxon>Eutheria</taxon>
        <taxon>Euarchontoglires</taxon>
        <taxon>Primates</taxon>
        <taxon>Haplorrhini</taxon>
        <taxon>Catarrhini</taxon>
        <taxon>Hominidae</taxon>
        <taxon>Homo</taxon>
    </lineage>
</organism>
<comment type="function">
    <text evidence="3">Odorant receptor.</text>
</comment>
<comment type="subcellular location">
    <subcellularLocation>
        <location>Cell membrane</location>
        <topology>Multi-pass membrane protein</topology>
    </subcellularLocation>
</comment>
<comment type="similarity">
    <text evidence="2">Belongs to the G-protein coupled receptor 1 family.</text>
</comment>
<comment type="online information" name="Human Olfactory Receptor Data Exploratorium (HORDE)">
    <link uri="http://genome.weizmann.ac.il/horde/card/index/symbol:OR10A6"/>
</comment>
<accession>Q8NH74</accession>
<accession>Q6IF59</accession>
<feature type="chain" id="PRO_0000150689" description="Olfactory receptor 10A6">
    <location>
        <begin position="1"/>
        <end position="314"/>
    </location>
</feature>
<feature type="topological domain" description="Extracellular" evidence="1">
    <location>
        <begin position="1"/>
        <end position="25"/>
    </location>
</feature>
<feature type="transmembrane region" description="Helical; Name=1" evidence="1">
    <location>
        <begin position="26"/>
        <end position="46"/>
    </location>
</feature>
<feature type="topological domain" description="Cytoplasmic" evidence="1">
    <location>
        <begin position="47"/>
        <end position="54"/>
    </location>
</feature>
<feature type="transmembrane region" description="Helical; Name=2" evidence="1">
    <location>
        <begin position="55"/>
        <end position="75"/>
    </location>
</feature>
<feature type="topological domain" description="Extracellular" evidence="1">
    <location>
        <begin position="76"/>
        <end position="99"/>
    </location>
</feature>
<feature type="transmembrane region" description="Helical; Name=3" evidence="1">
    <location>
        <begin position="100"/>
        <end position="120"/>
    </location>
</feature>
<feature type="topological domain" description="Cytoplasmic" evidence="1">
    <location>
        <begin position="121"/>
        <end position="139"/>
    </location>
</feature>
<feature type="transmembrane region" description="Helical; Name=4" evidence="1">
    <location>
        <begin position="140"/>
        <end position="160"/>
    </location>
</feature>
<feature type="topological domain" description="Extracellular" evidence="1">
    <location>
        <begin position="161"/>
        <end position="197"/>
    </location>
</feature>
<feature type="transmembrane region" description="Helical; Name=5" evidence="1">
    <location>
        <begin position="198"/>
        <end position="217"/>
    </location>
</feature>
<feature type="topological domain" description="Cytoplasmic" evidence="1">
    <location>
        <begin position="218"/>
        <end position="237"/>
    </location>
</feature>
<feature type="transmembrane region" description="Helical; Name=6" evidence="1">
    <location>
        <begin position="238"/>
        <end position="258"/>
    </location>
</feature>
<feature type="topological domain" description="Extracellular" evidence="1">
    <location>
        <begin position="259"/>
        <end position="271"/>
    </location>
</feature>
<feature type="transmembrane region" description="Helical; Name=7" evidence="1">
    <location>
        <begin position="272"/>
        <end position="292"/>
    </location>
</feature>
<feature type="topological domain" description="Cytoplasmic" evidence="1">
    <location>
        <begin position="293"/>
        <end position="314"/>
    </location>
</feature>
<feature type="glycosylation site" description="N-linked (GlcNAc...) asparagine" evidence="1">
    <location>
        <position position="5"/>
    </location>
</feature>
<feature type="disulfide bond" evidence="2">
    <location>
        <begin position="97"/>
        <end position="189"/>
    </location>
</feature>
<feature type="sequence variant" id="VAR_053263" description="In dbSNP:rs7928451.">
    <original>A</original>
    <variation>V</variation>
    <location>
        <position position="117"/>
    </location>
</feature>
<feature type="sequence variant" id="VAR_053264" description="In dbSNP:rs7933807.">
    <original>V</original>
    <variation>G</variation>
    <location>
        <position position="140"/>
    </location>
</feature>
<feature type="sequence variant" id="VAR_053265" description="In dbSNP:rs4758258.">
    <original>L</original>
    <variation>P</variation>
    <location>
        <position position="287"/>
    </location>
</feature>